<comment type="function">
    <text evidence="1">Transfers and isomerizes the ribose moiety from AdoMet to the 7-aminomethyl group of 7-deazaguanine (preQ1-tRNA) to give epoxyqueuosine (oQ-tRNA).</text>
</comment>
<comment type="catalytic activity">
    <reaction evidence="1">
        <text>7-aminomethyl-7-carbaguanosine(34) in tRNA + S-adenosyl-L-methionine = epoxyqueuosine(34) in tRNA + adenine + L-methionine + 2 H(+)</text>
        <dbReference type="Rhea" id="RHEA:32155"/>
        <dbReference type="Rhea" id="RHEA-COMP:10342"/>
        <dbReference type="Rhea" id="RHEA-COMP:18582"/>
        <dbReference type="ChEBI" id="CHEBI:15378"/>
        <dbReference type="ChEBI" id="CHEBI:16708"/>
        <dbReference type="ChEBI" id="CHEBI:57844"/>
        <dbReference type="ChEBI" id="CHEBI:59789"/>
        <dbReference type="ChEBI" id="CHEBI:82833"/>
        <dbReference type="ChEBI" id="CHEBI:194443"/>
        <dbReference type="EC" id="2.4.99.17"/>
    </reaction>
</comment>
<comment type="pathway">
    <text evidence="1">tRNA modification; tRNA-queuosine biosynthesis.</text>
</comment>
<comment type="subunit">
    <text evidence="1">Monomer.</text>
</comment>
<comment type="subcellular location">
    <subcellularLocation>
        <location evidence="1">Cytoplasm</location>
    </subcellularLocation>
</comment>
<comment type="similarity">
    <text evidence="1">Belongs to the QueA family.</text>
</comment>
<feature type="chain" id="PRO_1000119148" description="S-adenosylmethionine:tRNA ribosyltransferase-isomerase">
    <location>
        <begin position="1"/>
        <end position="341"/>
    </location>
</feature>
<proteinExistence type="inferred from homology"/>
<keyword id="KW-0963">Cytoplasm</keyword>
<keyword id="KW-0671">Queuosine biosynthesis</keyword>
<keyword id="KW-0949">S-adenosyl-L-methionine</keyword>
<keyword id="KW-0808">Transferase</keyword>
<evidence type="ECO:0000255" key="1">
    <source>
        <dbReference type="HAMAP-Rule" id="MF_00113"/>
    </source>
</evidence>
<dbReference type="EC" id="2.4.99.17" evidence="1"/>
<dbReference type="EMBL" id="CP001581">
    <property type="protein sequence ID" value="ACO84715.1"/>
    <property type="molecule type" value="Genomic_DNA"/>
</dbReference>
<dbReference type="RefSeq" id="WP_003358060.1">
    <property type="nucleotide sequence ID" value="NC_012563.1"/>
</dbReference>
<dbReference type="SMR" id="C1FKG0"/>
<dbReference type="KEGG" id="cby:CLM_3474"/>
<dbReference type="eggNOG" id="COG0809">
    <property type="taxonomic scope" value="Bacteria"/>
</dbReference>
<dbReference type="HOGENOM" id="CLU_039110_1_0_9"/>
<dbReference type="UniPathway" id="UPA00392"/>
<dbReference type="Proteomes" id="UP000001374">
    <property type="component" value="Chromosome"/>
</dbReference>
<dbReference type="GO" id="GO:0005737">
    <property type="term" value="C:cytoplasm"/>
    <property type="evidence" value="ECO:0007669"/>
    <property type="project" value="UniProtKB-SubCell"/>
</dbReference>
<dbReference type="GO" id="GO:0051075">
    <property type="term" value="F:S-adenosylmethionine:tRNA ribosyltransferase-isomerase activity"/>
    <property type="evidence" value="ECO:0007669"/>
    <property type="project" value="UniProtKB-EC"/>
</dbReference>
<dbReference type="GO" id="GO:0008616">
    <property type="term" value="P:queuosine biosynthetic process"/>
    <property type="evidence" value="ECO:0007669"/>
    <property type="project" value="UniProtKB-UniRule"/>
</dbReference>
<dbReference type="GO" id="GO:0002099">
    <property type="term" value="P:tRNA wobble guanine modification"/>
    <property type="evidence" value="ECO:0007669"/>
    <property type="project" value="TreeGrafter"/>
</dbReference>
<dbReference type="FunFam" id="2.40.10.240:FF:000002">
    <property type="entry name" value="S-adenosylmethionine:tRNA ribosyltransferase-isomerase"/>
    <property type="match status" value="1"/>
</dbReference>
<dbReference type="FunFam" id="3.40.1780.10:FF:000001">
    <property type="entry name" value="S-adenosylmethionine:tRNA ribosyltransferase-isomerase"/>
    <property type="match status" value="1"/>
</dbReference>
<dbReference type="Gene3D" id="2.40.10.240">
    <property type="entry name" value="QueA-like"/>
    <property type="match status" value="1"/>
</dbReference>
<dbReference type="Gene3D" id="3.40.1780.10">
    <property type="entry name" value="QueA-like"/>
    <property type="match status" value="1"/>
</dbReference>
<dbReference type="HAMAP" id="MF_00113">
    <property type="entry name" value="QueA"/>
    <property type="match status" value="1"/>
</dbReference>
<dbReference type="InterPro" id="IPR003699">
    <property type="entry name" value="QueA"/>
</dbReference>
<dbReference type="InterPro" id="IPR042118">
    <property type="entry name" value="QueA_dom1"/>
</dbReference>
<dbReference type="InterPro" id="IPR042119">
    <property type="entry name" value="QueA_dom2"/>
</dbReference>
<dbReference type="InterPro" id="IPR036100">
    <property type="entry name" value="QueA_sf"/>
</dbReference>
<dbReference type="NCBIfam" id="NF001140">
    <property type="entry name" value="PRK00147.1"/>
    <property type="match status" value="1"/>
</dbReference>
<dbReference type="NCBIfam" id="TIGR00113">
    <property type="entry name" value="queA"/>
    <property type="match status" value="1"/>
</dbReference>
<dbReference type="PANTHER" id="PTHR30307">
    <property type="entry name" value="S-ADENOSYLMETHIONINE:TRNA RIBOSYLTRANSFERASE-ISOMERASE"/>
    <property type="match status" value="1"/>
</dbReference>
<dbReference type="PANTHER" id="PTHR30307:SF0">
    <property type="entry name" value="S-ADENOSYLMETHIONINE:TRNA RIBOSYLTRANSFERASE-ISOMERASE"/>
    <property type="match status" value="1"/>
</dbReference>
<dbReference type="Pfam" id="PF02547">
    <property type="entry name" value="Queuosine_synth"/>
    <property type="match status" value="1"/>
</dbReference>
<dbReference type="SUPFAM" id="SSF111337">
    <property type="entry name" value="QueA-like"/>
    <property type="match status" value="1"/>
</dbReference>
<reference key="1">
    <citation type="submission" date="2008-10" db="EMBL/GenBank/DDBJ databases">
        <title>Genome sequence of Clostridium botulinum A2 Kyoto.</title>
        <authorList>
            <person name="Shrivastava S."/>
            <person name="Brinkac L.M."/>
            <person name="Brown J.L."/>
            <person name="Bruce D."/>
            <person name="Detter C.C."/>
            <person name="Johnson E.A."/>
            <person name="Munk C.A."/>
            <person name="Smith L.A."/>
            <person name="Smith T.J."/>
            <person name="Sutton G."/>
            <person name="Brettin T.S."/>
        </authorList>
    </citation>
    <scope>NUCLEOTIDE SEQUENCE [LARGE SCALE GENOMIC DNA]</scope>
    <source>
        <strain>Kyoto / Type A2</strain>
    </source>
</reference>
<gene>
    <name evidence="1" type="primary">queA</name>
    <name type="ordered locus">CLM_3474</name>
</gene>
<accession>C1FKG0</accession>
<protein>
    <recommendedName>
        <fullName evidence="1">S-adenosylmethionine:tRNA ribosyltransferase-isomerase</fullName>
        <ecNumber evidence="1">2.4.99.17</ecNumber>
    </recommendedName>
    <alternativeName>
        <fullName evidence="1">Queuosine biosynthesis protein QueA</fullName>
    </alternativeName>
</protein>
<organism>
    <name type="scientific">Clostridium botulinum (strain Kyoto / Type A2)</name>
    <dbReference type="NCBI Taxonomy" id="536232"/>
    <lineage>
        <taxon>Bacteria</taxon>
        <taxon>Bacillati</taxon>
        <taxon>Bacillota</taxon>
        <taxon>Clostridia</taxon>
        <taxon>Eubacteriales</taxon>
        <taxon>Clostridiaceae</taxon>
        <taxon>Clostridium</taxon>
    </lineage>
</organism>
<name>QUEA_CLOBJ</name>
<sequence>MKVKDFDFYLPEELIAQHPMEKRDEARLLVLDKKTGGIEHKIFKDILDYLTPNDCLVLNNTRVLPARLIGAKEETGGKMEFLLLKRKEKDVWETLVKPGKRAQIGARFIFGNGELKAEVIGMGEEGSRIVKFYYEGIFEEILDQLGQMPLPPYIKEKLDDKEMYQTVYSKEEGSAAAPTAGLHFTEELLKKIKEKGVKLAFLTLHVGLGTFRPVKVENIQEHVMHSEYYKMDKETAEIINDTKEKGGRVIAVGTTSCRTLETIGDIEGKVREQSGWTDIFIYPGYKYKVVDALITNFHLPQSTLLMLVSALAGRDNIMNAYNVAVEKEYRFFSFGDAMFIK</sequence>